<name>SYM_SHEHH</name>
<protein>
    <recommendedName>
        <fullName evidence="1">Methionine--tRNA ligase</fullName>
        <ecNumber evidence="1">6.1.1.10</ecNumber>
    </recommendedName>
    <alternativeName>
        <fullName evidence="1">Methionyl-tRNA synthetase</fullName>
        <shortName evidence="1">MetRS</shortName>
    </alternativeName>
</protein>
<keyword id="KW-0030">Aminoacyl-tRNA synthetase</keyword>
<keyword id="KW-0067">ATP-binding</keyword>
<keyword id="KW-0963">Cytoplasm</keyword>
<keyword id="KW-0436">Ligase</keyword>
<keyword id="KW-0479">Metal-binding</keyword>
<keyword id="KW-0547">Nucleotide-binding</keyword>
<keyword id="KW-0648">Protein biosynthesis</keyword>
<keyword id="KW-0694">RNA-binding</keyword>
<keyword id="KW-0820">tRNA-binding</keyword>
<keyword id="KW-0862">Zinc</keyword>
<organism>
    <name type="scientific">Shewanella halifaxensis (strain HAW-EB4)</name>
    <dbReference type="NCBI Taxonomy" id="458817"/>
    <lineage>
        <taxon>Bacteria</taxon>
        <taxon>Pseudomonadati</taxon>
        <taxon>Pseudomonadota</taxon>
        <taxon>Gammaproteobacteria</taxon>
        <taxon>Alteromonadales</taxon>
        <taxon>Shewanellaceae</taxon>
        <taxon>Shewanella</taxon>
    </lineage>
</organism>
<evidence type="ECO:0000255" key="1">
    <source>
        <dbReference type="HAMAP-Rule" id="MF_00098"/>
    </source>
</evidence>
<comment type="function">
    <text evidence="1">Is required not only for elongation of protein synthesis but also for the initiation of all mRNA translation through initiator tRNA(fMet) aminoacylation.</text>
</comment>
<comment type="catalytic activity">
    <reaction evidence="1">
        <text>tRNA(Met) + L-methionine + ATP = L-methionyl-tRNA(Met) + AMP + diphosphate</text>
        <dbReference type="Rhea" id="RHEA:13481"/>
        <dbReference type="Rhea" id="RHEA-COMP:9667"/>
        <dbReference type="Rhea" id="RHEA-COMP:9698"/>
        <dbReference type="ChEBI" id="CHEBI:30616"/>
        <dbReference type="ChEBI" id="CHEBI:33019"/>
        <dbReference type="ChEBI" id="CHEBI:57844"/>
        <dbReference type="ChEBI" id="CHEBI:78442"/>
        <dbReference type="ChEBI" id="CHEBI:78530"/>
        <dbReference type="ChEBI" id="CHEBI:456215"/>
        <dbReference type="EC" id="6.1.1.10"/>
    </reaction>
</comment>
<comment type="cofactor">
    <cofactor evidence="1">
        <name>Zn(2+)</name>
        <dbReference type="ChEBI" id="CHEBI:29105"/>
    </cofactor>
    <text evidence="1">Binds 1 zinc ion per subunit.</text>
</comment>
<comment type="subunit">
    <text evidence="1">Homodimer.</text>
</comment>
<comment type="subcellular location">
    <subcellularLocation>
        <location evidence="1">Cytoplasm</location>
    </subcellularLocation>
</comment>
<comment type="similarity">
    <text evidence="1">Belongs to the class-I aminoacyl-tRNA synthetase family. MetG type 1 subfamily.</text>
</comment>
<proteinExistence type="inferred from homology"/>
<gene>
    <name evidence="1" type="primary">metG</name>
    <name type="ordered locus">Shal_2381</name>
</gene>
<dbReference type="EC" id="6.1.1.10" evidence="1"/>
<dbReference type="EMBL" id="CP000931">
    <property type="protein sequence ID" value="ABZ76940.1"/>
    <property type="molecule type" value="Genomic_DNA"/>
</dbReference>
<dbReference type="RefSeq" id="WP_012277468.1">
    <property type="nucleotide sequence ID" value="NC_010334.1"/>
</dbReference>
<dbReference type="SMR" id="B0TJ05"/>
<dbReference type="STRING" id="458817.Shal_2381"/>
<dbReference type="KEGG" id="shl:Shal_2381"/>
<dbReference type="eggNOG" id="COG0073">
    <property type="taxonomic scope" value="Bacteria"/>
</dbReference>
<dbReference type="eggNOG" id="COG0143">
    <property type="taxonomic scope" value="Bacteria"/>
</dbReference>
<dbReference type="HOGENOM" id="CLU_009710_7_0_6"/>
<dbReference type="OrthoDB" id="9810191at2"/>
<dbReference type="Proteomes" id="UP000001317">
    <property type="component" value="Chromosome"/>
</dbReference>
<dbReference type="GO" id="GO:0005829">
    <property type="term" value="C:cytosol"/>
    <property type="evidence" value="ECO:0007669"/>
    <property type="project" value="TreeGrafter"/>
</dbReference>
<dbReference type="GO" id="GO:0005524">
    <property type="term" value="F:ATP binding"/>
    <property type="evidence" value="ECO:0007669"/>
    <property type="project" value="UniProtKB-UniRule"/>
</dbReference>
<dbReference type="GO" id="GO:0046872">
    <property type="term" value="F:metal ion binding"/>
    <property type="evidence" value="ECO:0007669"/>
    <property type="project" value="UniProtKB-KW"/>
</dbReference>
<dbReference type="GO" id="GO:0004825">
    <property type="term" value="F:methionine-tRNA ligase activity"/>
    <property type="evidence" value="ECO:0007669"/>
    <property type="project" value="UniProtKB-UniRule"/>
</dbReference>
<dbReference type="GO" id="GO:0000049">
    <property type="term" value="F:tRNA binding"/>
    <property type="evidence" value="ECO:0007669"/>
    <property type="project" value="UniProtKB-KW"/>
</dbReference>
<dbReference type="GO" id="GO:0006431">
    <property type="term" value="P:methionyl-tRNA aminoacylation"/>
    <property type="evidence" value="ECO:0007669"/>
    <property type="project" value="UniProtKB-UniRule"/>
</dbReference>
<dbReference type="CDD" id="cd07957">
    <property type="entry name" value="Anticodon_Ia_Met"/>
    <property type="match status" value="1"/>
</dbReference>
<dbReference type="CDD" id="cd00814">
    <property type="entry name" value="MetRS_core"/>
    <property type="match status" value="1"/>
</dbReference>
<dbReference type="CDD" id="cd02800">
    <property type="entry name" value="tRNA_bind_EcMetRS_like"/>
    <property type="match status" value="1"/>
</dbReference>
<dbReference type="FunFam" id="1.10.730.10:FF:000005">
    <property type="entry name" value="Methionine--tRNA ligase"/>
    <property type="match status" value="1"/>
</dbReference>
<dbReference type="FunFam" id="2.20.28.20:FF:000001">
    <property type="entry name" value="Methionine--tRNA ligase"/>
    <property type="match status" value="1"/>
</dbReference>
<dbReference type="FunFam" id="2.40.50.140:FF:000042">
    <property type="entry name" value="Methionine--tRNA ligase"/>
    <property type="match status" value="1"/>
</dbReference>
<dbReference type="Gene3D" id="3.40.50.620">
    <property type="entry name" value="HUPs"/>
    <property type="match status" value="1"/>
</dbReference>
<dbReference type="Gene3D" id="1.10.730.10">
    <property type="entry name" value="Isoleucyl-tRNA Synthetase, Domain 1"/>
    <property type="match status" value="1"/>
</dbReference>
<dbReference type="Gene3D" id="2.20.28.20">
    <property type="entry name" value="Methionyl-tRNA synthetase, Zn-domain"/>
    <property type="match status" value="1"/>
</dbReference>
<dbReference type="Gene3D" id="2.40.50.140">
    <property type="entry name" value="Nucleic acid-binding proteins"/>
    <property type="match status" value="1"/>
</dbReference>
<dbReference type="HAMAP" id="MF_00098">
    <property type="entry name" value="Met_tRNA_synth_type1"/>
    <property type="match status" value="1"/>
</dbReference>
<dbReference type="InterPro" id="IPR001412">
    <property type="entry name" value="aa-tRNA-synth_I_CS"/>
</dbReference>
<dbReference type="InterPro" id="IPR041872">
    <property type="entry name" value="Anticodon_Met"/>
</dbReference>
<dbReference type="InterPro" id="IPR004495">
    <property type="entry name" value="Met-tRNA-synth_bsu_C"/>
</dbReference>
<dbReference type="InterPro" id="IPR023458">
    <property type="entry name" value="Met-tRNA_ligase_1"/>
</dbReference>
<dbReference type="InterPro" id="IPR014758">
    <property type="entry name" value="Met-tRNA_synth"/>
</dbReference>
<dbReference type="InterPro" id="IPR015413">
    <property type="entry name" value="Methionyl/Leucyl_tRNA_Synth"/>
</dbReference>
<dbReference type="InterPro" id="IPR033911">
    <property type="entry name" value="MetRS_core"/>
</dbReference>
<dbReference type="InterPro" id="IPR029038">
    <property type="entry name" value="MetRS_Zn"/>
</dbReference>
<dbReference type="InterPro" id="IPR012340">
    <property type="entry name" value="NA-bd_OB-fold"/>
</dbReference>
<dbReference type="InterPro" id="IPR014729">
    <property type="entry name" value="Rossmann-like_a/b/a_fold"/>
</dbReference>
<dbReference type="InterPro" id="IPR002547">
    <property type="entry name" value="tRNA-bd_dom"/>
</dbReference>
<dbReference type="InterPro" id="IPR009080">
    <property type="entry name" value="tRNAsynth_Ia_anticodon-bd"/>
</dbReference>
<dbReference type="NCBIfam" id="TIGR00398">
    <property type="entry name" value="metG"/>
    <property type="match status" value="1"/>
</dbReference>
<dbReference type="NCBIfam" id="TIGR00399">
    <property type="entry name" value="metG_C_term"/>
    <property type="match status" value="1"/>
</dbReference>
<dbReference type="NCBIfam" id="NF001100">
    <property type="entry name" value="PRK00133.1"/>
    <property type="match status" value="1"/>
</dbReference>
<dbReference type="PANTHER" id="PTHR45765">
    <property type="entry name" value="METHIONINE--TRNA LIGASE"/>
    <property type="match status" value="1"/>
</dbReference>
<dbReference type="PANTHER" id="PTHR45765:SF1">
    <property type="entry name" value="METHIONINE--TRNA LIGASE, CYTOPLASMIC"/>
    <property type="match status" value="1"/>
</dbReference>
<dbReference type="Pfam" id="PF19303">
    <property type="entry name" value="Anticodon_3"/>
    <property type="match status" value="1"/>
</dbReference>
<dbReference type="Pfam" id="PF09334">
    <property type="entry name" value="tRNA-synt_1g"/>
    <property type="match status" value="1"/>
</dbReference>
<dbReference type="Pfam" id="PF01588">
    <property type="entry name" value="tRNA_bind"/>
    <property type="match status" value="1"/>
</dbReference>
<dbReference type="PRINTS" id="PR01041">
    <property type="entry name" value="TRNASYNTHMET"/>
</dbReference>
<dbReference type="SUPFAM" id="SSF47323">
    <property type="entry name" value="Anticodon-binding domain of a subclass of class I aminoacyl-tRNA synthetases"/>
    <property type="match status" value="1"/>
</dbReference>
<dbReference type="SUPFAM" id="SSF57770">
    <property type="entry name" value="Methionyl-tRNA synthetase (MetRS), Zn-domain"/>
    <property type="match status" value="1"/>
</dbReference>
<dbReference type="SUPFAM" id="SSF50249">
    <property type="entry name" value="Nucleic acid-binding proteins"/>
    <property type="match status" value="1"/>
</dbReference>
<dbReference type="SUPFAM" id="SSF52374">
    <property type="entry name" value="Nucleotidylyl transferase"/>
    <property type="match status" value="1"/>
</dbReference>
<dbReference type="PROSITE" id="PS00178">
    <property type="entry name" value="AA_TRNA_LIGASE_I"/>
    <property type="match status" value="1"/>
</dbReference>
<dbReference type="PROSITE" id="PS50886">
    <property type="entry name" value="TRBD"/>
    <property type="match status" value="1"/>
</dbReference>
<sequence length="679" mass="76807">MANSQRKILVTSALPYANGPIHLGHMLEYIQTDIWSRFQKLRGHECHYICADDAHGTPIMLKAQQMGIAPEEMIAQVQKEHEKDFADFNIQFDNFHSTHSDENRELASQVYIKLRDAGYIKTKTISQLFDPEKSMFLPDRFVKGTCPRCKSEDQYGDNCDNCGATYSTTDLIDPRSAVSGATPVMKDSEHFFFDLPAFEGMLKEWINSGSLQQEMANKLGEWFEQGLQQWDISRDAPYFGFEIPDAPGKFFYVWLDAPIGYMGSFKNLCNKRDDLNFDEFWSKDSTAEVYHFIGKDIVYFHSLFWPAMLEGAGLRKPTSVYAHGYVTVNGAKMSKSKGTFIKARTYLDNLDPEYLRYYYAAKLSSRIDDLDLNLEDFAQRVNSDLVGKLVNLASRTAGFISKRFGGKLAKIADTSLTTSFLAKQEIIANFYETREYGKAMREIMALADIANAYVADSAPWQLIKEEDKQEEAHQVCSNALNLFRILVTYLKPVLPKLAQDVEAFLQMELTWDNLDIDLAGHEIAKFKALMQRVEMKSIEAIIEASKENLQVTAEPEVKKEVKTPLEQDPILDEISFDDFAKIDLRIARIAKAEHVKEANKLLRLELDLGGETKQVFAGIKSAYAPEDLEGKLTVMVANLAPRQMRFGVSEGMVLAAGPGGKDLWIMEPHEGAQPGMKVK</sequence>
<accession>B0TJ05</accession>
<reference key="1">
    <citation type="submission" date="2008-01" db="EMBL/GenBank/DDBJ databases">
        <title>Complete sequence of Shewanella halifaxensis HAW-EB4.</title>
        <authorList>
            <consortium name="US DOE Joint Genome Institute"/>
            <person name="Copeland A."/>
            <person name="Lucas S."/>
            <person name="Lapidus A."/>
            <person name="Glavina del Rio T."/>
            <person name="Dalin E."/>
            <person name="Tice H."/>
            <person name="Bruce D."/>
            <person name="Goodwin L."/>
            <person name="Pitluck S."/>
            <person name="Sims D."/>
            <person name="Brettin T."/>
            <person name="Detter J.C."/>
            <person name="Han C."/>
            <person name="Kuske C.R."/>
            <person name="Schmutz J."/>
            <person name="Larimer F."/>
            <person name="Land M."/>
            <person name="Hauser L."/>
            <person name="Kyrpides N."/>
            <person name="Kim E."/>
            <person name="Zhao J.-S."/>
            <person name="Richardson P."/>
        </authorList>
    </citation>
    <scope>NUCLEOTIDE SEQUENCE [LARGE SCALE GENOMIC DNA]</scope>
    <source>
        <strain>HAW-EB4</strain>
    </source>
</reference>
<feature type="chain" id="PRO_1000075588" description="Methionine--tRNA ligase">
    <location>
        <begin position="1"/>
        <end position="679"/>
    </location>
</feature>
<feature type="domain" description="tRNA-binding" evidence="1">
    <location>
        <begin position="578"/>
        <end position="679"/>
    </location>
</feature>
<feature type="short sequence motif" description="'HIGH' region">
    <location>
        <begin position="15"/>
        <end position="25"/>
    </location>
</feature>
<feature type="short sequence motif" description="'KMSKS' region">
    <location>
        <begin position="332"/>
        <end position="336"/>
    </location>
</feature>
<feature type="binding site" evidence="1">
    <location>
        <position position="146"/>
    </location>
    <ligand>
        <name>Zn(2+)</name>
        <dbReference type="ChEBI" id="CHEBI:29105"/>
    </ligand>
</feature>
<feature type="binding site" evidence="1">
    <location>
        <position position="149"/>
    </location>
    <ligand>
        <name>Zn(2+)</name>
        <dbReference type="ChEBI" id="CHEBI:29105"/>
    </ligand>
</feature>
<feature type="binding site" evidence="1">
    <location>
        <position position="159"/>
    </location>
    <ligand>
        <name>Zn(2+)</name>
        <dbReference type="ChEBI" id="CHEBI:29105"/>
    </ligand>
</feature>
<feature type="binding site" evidence="1">
    <location>
        <position position="162"/>
    </location>
    <ligand>
        <name>Zn(2+)</name>
        <dbReference type="ChEBI" id="CHEBI:29105"/>
    </ligand>
</feature>
<feature type="binding site" evidence="1">
    <location>
        <position position="335"/>
    </location>
    <ligand>
        <name>ATP</name>
        <dbReference type="ChEBI" id="CHEBI:30616"/>
    </ligand>
</feature>